<dbReference type="EC" id="2.7.7.60" evidence="1"/>
<dbReference type="EC" id="4.6.1.12" evidence="1"/>
<dbReference type="EMBL" id="AE007869">
    <property type="protein sequence ID" value="AAK87234.2"/>
    <property type="status" value="ALT_INIT"/>
    <property type="molecule type" value="Genomic_DNA"/>
</dbReference>
<dbReference type="PIR" id="A97535">
    <property type="entry name" value="A97535"/>
</dbReference>
<dbReference type="PIR" id="AC2754">
    <property type="entry name" value="AC2754"/>
</dbReference>
<dbReference type="RefSeq" id="NP_354449.2">
    <property type="nucleotide sequence ID" value="NC_003062.2"/>
</dbReference>
<dbReference type="RefSeq" id="WP_010971626.1">
    <property type="nucleotide sequence ID" value="NC_003062.2"/>
</dbReference>
<dbReference type="SMR" id="Q8UFF4"/>
<dbReference type="STRING" id="176299.Atu1443"/>
<dbReference type="EnsemblBacteria" id="AAK87234">
    <property type="protein sequence ID" value="AAK87234"/>
    <property type="gene ID" value="Atu1443"/>
</dbReference>
<dbReference type="GeneID" id="1133481"/>
<dbReference type="KEGG" id="atu:Atu1443"/>
<dbReference type="PATRIC" id="fig|176299.10.peg.1464"/>
<dbReference type="eggNOG" id="COG0245">
    <property type="taxonomic scope" value="Bacteria"/>
</dbReference>
<dbReference type="eggNOG" id="COG1211">
    <property type="taxonomic scope" value="Bacteria"/>
</dbReference>
<dbReference type="HOGENOM" id="CLU_042800_1_0_5"/>
<dbReference type="OrthoDB" id="9804336at2"/>
<dbReference type="BioCyc" id="AGRO:ATU1443-MONOMER"/>
<dbReference type="UniPathway" id="UPA00056">
    <property type="reaction ID" value="UER00093"/>
</dbReference>
<dbReference type="UniPathway" id="UPA00056">
    <property type="reaction ID" value="UER00095"/>
</dbReference>
<dbReference type="Proteomes" id="UP000000813">
    <property type="component" value="Chromosome circular"/>
</dbReference>
<dbReference type="GO" id="GO:0008685">
    <property type="term" value="F:2-C-methyl-D-erythritol 2,4-cyclodiphosphate synthase activity"/>
    <property type="evidence" value="ECO:0007669"/>
    <property type="project" value="UniProtKB-UniRule"/>
</dbReference>
<dbReference type="GO" id="GO:0050518">
    <property type="term" value="F:2-C-methyl-D-erythritol 4-phosphate cytidylyltransferase activity"/>
    <property type="evidence" value="ECO:0007669"/>
    <property type="project" value="UniProtKB-UniRule"/>
</dbReference>
<dbReference type="GO" id="GO:0046872">
    <property type="term" value="F:metal ion binding"/>
    <property type="evidence" value="ECO:0007669"/>
    <property type="project" value="UniProtKB-KW"/>
</dbReference>
<dbReference type="GO" id="GO:0019288">
    <property type="term" value="P:isopentenyl diphosphate biosynthetic process, methylerythritol 4-phosphate pathway"/>
    <property type="evidence" value="ECO:0007669"/>
    <property type="project" value="UniProtKB-UniRule"/>
</dbReference>
<dbReference type="GO" id="GO:0016114">
    <property type="term" value="P:terpenoid biosynthetic process"/>
    <property type="evidence" value="ECO:0007669"/>
    <property type="project" value="InterPro"/>
</dbReference>
<dbReference type="CDD" id="cd02516">
    <property type="entry name" value="CDP-ME_synthetase"/>
    <property type="match status" value="1"/>
</dbReference>
<dbReference type="CDD" id="cd00554">
    <property type="entry name" value="MECDP_synthase"/>
    <property type="match status" value="1"/>
</dbReference>
<dbReference type="FunFam" id="3.90.550.10:FF:000003">
    <property type="entry name" value="2-C-methyl-D-erythritol 4-phosphate cytidylyltransferase"/>
    <property type="match status" value="1"/>
</dbReference>
<dbReference type="Gene3D" id="3.30.1330.50">
    <property type="entry name" value="2-C-methyl-D-erythritol 2,4-cyclodiphosphate synthase"/>
    <property type="match status" value="1"/>
</dbReference>
<dbReference type="Gene3D" id="3.90.550.10">
    <property type="entry name" value="Spore Coat Polysaccharide Biosynthesis Protein SpsA, Chain A"/>
    <property type="match status" value="1"/>
</dbReference>
<dbReference type="HAMAP" id="MF_00108">
    <property type="entry name" value="IspD"/>
    <property type="match status" value="1"/>
</dbReference>
<dbReference type="HAMAP" id="MF_01520">
    <property type="entry name" value="IspDF"/>
    <property type="match status" value="1"/>
</dbReference>
<dbReference type="HAMAP" id="MF_00107">
    <property type="entry name" value="IspF"/>
    <property type="match status" value="1"/>
</dbReference>
<dbReference type="InterPro" id="IPR001228">
    <property type="entry name" value="IspD"/>
</dbReference>
<dbReference type="InterPro" id="IPR026596">
    <property type="entry name" value="IspD/F"/>
</dbReference>
<dbReference type="InterPro" id="IPR034683">
    <property type="entry name" value="IspD/TarI"/>
</dbReference>
<dbReference type="InterPro" id="IPR018294">
    <property type="entry name" value="ISPD_synthase_CS"/>
</dbReference>
<dbReference type="InterPro" id="IPR003526">
    <property type="entry name" value="MECDP_synthase"/>
</dbReference>
<dbReference type="InterPro" id="IPR020555">
    <property type="entry name" value="MECDP_synthase_CS"/>
</dbReference>
<dbReference type="InterPro" id="IPR036571">
    <property type="entry name" value="MECDP_synthase_sf"/>
</dbReference>
<dbReference type="InterPro" id="IPR029044">
    <property type="entry name" value="Nucleotide-diphossugar_trans"/>
</dbReference>
<dbReference type="NCBIfam" id="TIGR00453">
    <property type="entry name" value="ispD"/>
    <property type="match status" value="1"/>
</dbReference>
<dbReference type="NCBIfam" id="TIGR00151">
    <property type="entry name" value="ispF"/>
    <property type="match status" value="1"/>
</dbReference>
<dbReference type="NCBIfam" id="NF006899">
    <property type="entry name" value="PRK09382.1"/>
    <property type="match status" value="1"/>
</dbReference>
<dbReference type="PANTHER" id="PTHR43181">
    <property type="entry name" value="2-C-METHYL-D-ERYTHRITOL 2,4-CYCLODIPHOSPHATE SYNTHASE, CHLOROPLASTIC"/>
    <property type="match status" value="1"/>
</dbReference>
<dbReference type="PANTHER" id="PTHR43181:SF1">
    <property type="entry name" value="2-C-METHYL-D-ERYTHRITOL 2,4-CYCLODIPHOSPHATE SYNTHASE, CHLOROPLASTIC"/>
    <property type="match status" value="1"/>
</dbReference>
<dbReference type="Pfam" id="PF01128">
    <property type="entry name" value="IspD"/>
    <property type="match status" value="1"/>
</dbReference>
<dbReference type="Pfam" id="PF02542">
    <property type="entry name" value="YgbB"/>
    <property type="match status" value="1"/>
</dbReference>
<dbReference type="SUPFAM" id="SSF69765">
    <property type="entry name" value="IpsF-like"/>
    <property type="match status" value="1"/>
</dbReference>
<dbReference type="SUPFAM" id="SSF53448">
    <property type="entry name" value="Nucleotide-diphospho-sugar transferases"/>
    <property type="match status" value="1"/>
</dbReference>
<dbReference type="PROSITE" id="PS01295">
    <property type="entry name" value="ISPD"/>
    <property type="match status" value="1"/>
</dbReference>
<dbReference type="PROSITE" id="PS01350">
    <property type="entry name" value="ISPF"/>
    <property type="match status" value="1"/>
</dbReference>
<protein>
    <recommendedName>
        <fullName evidence="1">Bifunctional enzyme IspD/IspF</fullName>
    </recommendedName>
    <domain>
        <recommendedName>
            <fullName evidence="1">2-C-methyl-D-erythritol 4-phosphate cytidylyltransferase</fullName>
            <ecNumber evidence="1">2.7.7.60</ecNumber>
        </recommendedName>
        <alternativeName>
            <fullName evidence="1">4-diphosphocytidyl-2C-methyl-D-erythritol synthase</fullName>
        </alternativeName>
        <alternativeName>
            <fullName evidence="1">MEP cytidylyltransferase</fullName>
            <shortName evidence="1">MCT</shortName>
        </alternativeName>
    </domain>
    <domain>
        <recommendedName>
            <fullName evidence="1">2-C-methyl-D-erythritol 2,4-cyclodiphosphate synthase</fullName>
            <shortName evidence="1">MECDP-synthase</shortName>
            <shortName evidence="1">MECPP-synthase</shortName>
            <shortName evidence="1">MECPS</shortName>
            <ecNumber evidence="1">4.6.1.12</ecNumber>
        </recommendedName>
    </domain>
</protein>
<reference key="1">
    <citation type="journal article" date="2001" name="Science">
        <title>The genome of the natural genetic engineer Agrobacterium tumefaciens C58.</title>
        <authorList>
            <person name="Wood D.W."/>
            <person name="Setubal J.C."/>
            <person name="Kaul R."/>
            <person name="Monks D.E."/>
            <person name="Kitajima J.P."/>
            <person name="Okura V.K."/>
            <person name="Zhou Y."/>
            <person name="Chen L."/>
            <person name="Wood G.E."/>
            <person name="Almeida N.F. Jr."/>
            <person name="Woo L."/>
            <person name="Chen Y."/>
            <person name="Paulsen I.T."/>
            <person name="Eisen J.A."/>
            <person name="Karp P.D."/>
            <person name="Bovee D. Sr."/>
            <person name="Chapman P."/>
            <person name="Clendenning J."/>
            <person name="Deatherage G."/>
            <person name="Gillet W."/>
            <person name="Grant C."/>
            <person name="Kutyavin T."/>
            <person name="Levy R."/>
            <person name="Li M.-J."/>
            <person name="McClelland E."/>
            <person name="Palmieri A."/>
            <person name="Raymond C."/>
            <person name="Rouse G."/>
            <person name="Saenphimmachak C."/>
            <person name="Wu Z."/>
            <person name="Romero P."/>
            <person name="Gordon D."/>
            <person name="Zhang S."/>
            <person name="Yoo H."/>
            <person name="Tao Y."/>
            <person name="Biddle P."/>
            <person name="Jung M."/>
            <person name="Krespan W."/>
            <person name="Perry M."/>
            <person name="Gordon-Kamm B."/>
            <person name="Liao L."/>
            <person name="Kim S."/>
            <person name="Hendrick C."/>
            <person name="Zhao Z.-Y."/>
            <person name="Dolan M."/>
            <person name="Chumley F."/>
            <person name="Tingey S.V."/>
            <person name="Tomb J.-F."/>
            <person name="Gordon M.P."/>
            <person name="Olson M.V."/>
            <person name="Nester E.W."/>
        </authorList>
    </citation>
    <scope>NUCLEOTIDE SEQUENCE [LARGE SCALE GENOMIC DNA]</scope>
    <source>
        <strain>C58 / ATCC 33970</strain>
    </source>
</reference>
<reference key="2">
    <citation type="journal article" date="2001" name="Science">
        <title>Genome sequence of the plant pathogen and biotechnology agent Agrobacterium tumefaciens C58.</title>
        <authorList>
            <person name="Goodner B."/>
            <person name="Hinkle G."/>
            <person name="Gattung S."/>
            <person name="Miller N."/>
            <person name="Blanchard M."/>
            <person name="Qurollo B."/>
            <person name="Goldman B.S."/>
            <person name="Cao Y."/>
            <person name="Askenazi M."/>
            <person name="Halling C."/>
            <person name="Mullin L."/>
            <person name="Houmiel K."/>
            <person name="Gordon J."/>
            <person name="Vaudin M."/>
            <person name="Iartchouk O."/>
            <person name="Epp A."/>
            <person name="Liu F."/>
            <person name="Wollam C."/>
            <person name="Allinger M."/>
            <person name="Doughty D."/>
            <person name="Scott C."/>
            <person name="Lappas C."/>
            <person name="Markelz B."/>
            <person name="Flanagan C."/>
            <person name="Crowell C."/>
            <person name="Gurson J."/>
            <person name="Lomo C."/>
            <person name="Sear C."/>
            <person name="Strub G."/>
            <person name="Cielo C."/>
            <person name="Slater S."/>
        </authorList>
    </citation>
    <scope>NUCLEOTIDE SEQUENCE [LARGE SCALE GENOMIC DNA]</scope>
    <source>
        <strain>C58 / ATCC 33970</strain>
    </source>
</reference>
<feature type="chain" id="PRO_0000075655" description="Bifunctional enzyme IspD/IspF">
    <location>
        <begin position="1"/>
        <end position="400"/>
    </location>
</feature>
<feature type="region of interest" description="2-C-methyl-D-erythritol 4-phosphate cytidylyltransferase" evidence="1">
    <location>
        <begin position="1"/>
        <end position="240"/>
    </location>
</feature>
<feature type="region of interest" description="2-C-methyl-D-erythritol 2,4-cyclodiphosphate synthase" evidence="1">
    <location>
        <begin position="241"/>
        <end position="400"/>
    </location>
</feature>
<feature type="binding site" evidence="1">
    <location>
        <begin position="247"/>
        <end position="249"/>
    </location>
    <ligand>
        <name>4-CDP-2-C-methyl-D-erythritol 2-phosphate</name>
        <dbReference type="ChEBI" id="CHEBI:57919"/>
    </ligand>
</feature>
<feature type="binding site" evidence="1">
    <location>
        <position position="247"/>
    </location>
    <ligand>
        <name>a divalent metal cation</name>
        <dbReference type="ChEBI" id="CHEBI:60240"/>
    </ligand>
</feature>
<feature type="binding site" evidence="1">
    <location>
        <position position="249"/>
    </location>
    <ligand>
        <name>a divalent metal cation</name>
        <dbReference type="ChEBI" id="CHEBI:60240"/>
    </ligand>
</feature>
<feature type="binding site" evidence="1">
    <location>
        <begin position="273"/>
        <end position="274"/>
    </location>
    <ligand>
        <name>4-CDP-2-C-methyl-D-erythritol 2-phosphate</name>
        <dbReference type="ChEBI" id="CHEBI:57919"/>
    </ligand>
</feature>
<feature type="binding site" evidence="1">
    <location>
        <position position="281"/>
    </location>
    <ligand>
        <name>a divalent metal cation</name>
        <dbReference type="ChEBI" id="CHEBI:60240"/>
    </ligand>
</feature>
<feature type="binding site" evidence="1">
    <location>
        <begin position="295"/>
        <end position="297"/>
    </location>
    <ligand>
        <name>4-CDP-2-C-methyl-D-erythritol 2-phosphate</name>
        <dbReference type="ChEBI" id="CHEBI:57919"/>
    </ligand>
</feature>
<feature type="binding site" evidence="1">
    <location>
        <begin position="371"/>
        <end position="374"/>
    </location>
    <ligand>
        <name>4-CDP-2-C-methyl-D-erythritol 2-phosphate</name>
        <dbReference type="ChEBI" id="CHEBI:57919"/>
    </ligand>
</feature>
<feature type="binding site" evidence="1">
    <location>
        <position position="378"/>
    </location>
    <ligand>
        <name>4-CDP-2-C-methyl-D-erythritol 2-phosphate</name>
        <dbReference type="ChEBI" id="CHEBI:57919"/>
    </ligand>
</feature>
<feature type="binding site" evidence="1">
    <location>
        <position position="381"/>
    </location>
    <ligand>
        <name>4-CDP-2-C-methyl-D-erythritol 2-phosphate</name>
        <dbReference type="ChEBI" id="CHEBI:57919"/>
    </ligand>
</feature>
<feature type="site" description="Transition state stabilizer" evidence="1">
    <location>
        <position position="20"/>
    </location>
</feature>
<feature type="site" description="Transition state stabilizer" evidence="1">
    <location>
        <position position="29"/>
    </location>
</feature>
<feature type="site" description="Positions MEP for the nucleophilic attack" evidence="1">
    <location>
        <position position="162"/>
    </location>
</feature>
<feature type="site" description="Positions MEP for the nucleophilic attack" evidence="1">
    <location>
        <position position="219"/>
    </location>
</feature>
<feature type="site" description="Transition state stabilizer" evidence="1">
    <location>
        <position position="273"/>
    </location>
</feature>
<feature type="site" description="Transition state stabilizer" evidence="1">
    <location>
        <position position="372"/>
    </location>
</feature>
<name>ISPDF_AGRFC</name>
<sequence>MQESTMKFGIVIVAAGRGERAGSPEEGPKQYRPIGGRAVIEHTLATFLRWNDACPIVVVSHADDAALLSPILARLDAGERITTVTGGATRQQSVLAGLEALSSHGLTHVMIHDAVRPFVAADMLERIAALHRAGAGGVLPALPVTDTLKRGLEDRVVETVSRQGLYAAQTPQSFSYSDILDAHRAAAASGKTDFTDDASIAEWTGLTVTLTEGSVDNVKLTLKRDIAMADEKLSHALPDVRTGNGYDVHQLEAGDGVTLCGIFIEHDQRLKGHSDADVALHALTDALLATCGAGDIGDHFPPSDPQWKGAASRIFLEHAAKVVRDNGGTIMNADVSLIAEAPRIGPHRQAMREALSDMLGIALERCSVKATTNETIGFVGRREGIAAIATATVVYQGRPL</sequence>
<keyword id="KW-0414">Isoprene biosynthesis</keyword>
<keyword id="KW-0456">Lyase</keyword>
<keyword id="KW-0479">Metal-binding</keyword>
<keyword id="KW-0511">Multifunctional enzyme</keyword>
<keyword id="KW-0548">Nucleotidyltransferase</keyword>
<keyword id="KW-1185">Reference proteome</keyword>
<keyword id="KW-0808">Transferase</keyword>
<gene>
    <name evidence="1" type="primary">ispDF</name>
    <name type="ordered locus">Atu1443</name>
    <name type="ORF">AGR_C_2659</name>
</gene>
<organism>
    <name type="scientific">Agrobacterium fabrum (strain C58 / ATCC 33970)</name>
    <name type="common">Agrobacterium tumefaciens (strain C58)</name>
    <dbReference type="NCBI Taxonomy" id="176299"/>
    <lineage>
        <taxon>Bacteria</taxon>
        <taxon>Pseudomonadati</taxon>
        <taxon>Pseudomonadota</taxon>
        <taxon>Alphaproteobacteria</taxon>
        <taxon>Hyphomicrobiales</taxon>
        <taxon>Rhizobiaceae</taxon>
        <taxon>Rhizobium/Agrobacterium group</taxon>
        <taxon>Agrobacterium</taxon>
        <taxon>Agrobacterium tumefaciens complex</taxon>
    </lineage>
</organism>
<proteinExistence type="inferred from homology"/>
<accession>Q8UFF4</accession>
<comment type="function">
    <text evidence="1">Bifunctional enzyme that catalyzes the formation of 4-diphosphocytidyl-2-C-methyl-D-erythritol from CTP and 2-C-methyl-D-erythritol 4-phosphate (MEP) (IspD), and catalyzes the conversion of 4-diphosphocytidyl-2-C-methyl-D-erythritol 2-phosphate (CDP-ME2P) to 2-C-methyl-D-erythritol 2,4-cyclodiphosphate (ME-CPP) with a corresponding release of cytidine 5-monophosphate (CMP) (IspF).</text>
</comment>
<comment type="catalytic activity">
    <reaction evidence="1">
        <text>2-C-methyl-D-erythritol 4-phosphate + CTP + H(+) = 4-CDP-2-C-methyl-D-erythritol + diphosphate</text>
        <dbReference type="Rhea" id="RHEA:13429"/>
        <dbReference type="ChEBI" id="CHEBI:15378"/>
        <dbReference type="ChEBI" id="CHEBI:33019"/>
        <dbReference type="ChEBI" id="CHEBI:37563"/>
        <dbReference type="ChEBI" id="CHEBI:57823"/>
        <dbReference type="ChEBI" id="CHEBI:58262"/>
        <dbReference type="EC" id="2.7.7.60"/>
    </reaction>
</comment>
<comment type="catalytic activity">
    <reaction evidence="1">
        <text>4-CDP-2-C-methyl-D-erythritol 2-phosphate = 2-C-methyl-D-erythritol 2,4-cyclic diphosphate + CMP</text>
        <dbReference type="Rhea" id="RHEA:23864"/>
        <dbReference type="ChEBI" id="CHEBI:57919"/>
        <dbReference type="ChEBI" id="CHEBI:58483"/>
        <dbReference type="ChEBI" id="CHEBI:60377"/>
        <dbReference type="EC" id="4.6.1.12"/>
    </reaction>
</comment>
<comment type="cofactor">
    <cofactor evidence="1">
        <name>a divalent metal cation</name>
        <dbReference type="ChEBI" id="CHEBI:60240"/>
    </cofactor>
</comment>
<comment type="pathway">
    <text evidence="1">Isoprenoid biosynthesis; isopentenyl diphosphate biosynthesis via DXP pathway; isopentenyl diphosphate from 1-deoxy-D-xylulose 5-phosphate: step 2/6.</text>
</comment>
<comment type="pathway">
    <text evidence="1">Isoprenoid biosynthesis; isopentenyl diphosphate biosynthesis via DXP pathway; isopentenyl diphosphate from 1-deoxy-D-xylulose 5-phosphate: step 4/6.</text>
</comment>
<comment type="similarity">
    <text evidence="1">In the N-terminal section; belongs to the IspD/TarI cytidylyltransferase family. IspD subfamily.</text>
</comment>
<comment type="similarity">
    <text evidence="1">In the C-terminal section; belongs to the IspF family.</text>
</comment>
<comment type="sequence caution" evidence="2">
    <conflict type="erroneous initiation">
        <sequence resource="EMBL-CDS" id="AAK87234"/>
    </conflict>
    <text>Truncated N-terminus.</text>
</comment>
<evidence type="ECO:0000255" key="1">
    <source>
        <dbReference type="HAMAP-Rule" id="MF_01520"/>
    </source>
</evidence>
<evidence type="ECO:0000305" key="2"/>